<proteinExistence type="inferred from homology"/>
<keyword id="KW-0963">Cytoplasm</keyword>
<keyword id="KW-0418">Kinase</keyword>
<keyword id="KW-0808">Transferase</keyword>
<comment type="function">
    <text evidence="1">Catalyzes the phosphorylation of autoinducer-2 (AI-2) to phospho-AI-2, which subsequently inactivates the transcriptional regulator LsrR and leads to the transcription of the lsr operon. Phosphorylates the ring-open form of (S)-4,5-dihydroxypentane-2,3-dione (DPD), which is the precursor to all AI-2 signaling molecules, at the C5 position.</text>
</comment>
<comment type="catalytic activity">
    <reaction evidence="1">
        <text>(S)-4,5-dihydroxypentane-2,3-dione + ATP = (2S)-2-hydroxy-3,4-dioxopentyl phosphate + ADP + H(+)</text>
        <dbReference type="Rhea" id="RHEA:15377"/>
        <dbReference type="ChEBI" id="CHEBI:15378"/>
        <dbReference type="ChEBI" id="CHEBI:29484"/>
        <dbReference type="ChEBI" id="CHEBI:30616"/>
        <dbReference type="ChEBI" id="CHEBI:71677"/>
        <dbReference type="ChEBI" id="CHEBI:456216"/>
        <dbReference type="EC" id="2.7.1.189"/>
    </reaction>
</comment>
<comment type="subcellular location">
    <subcellularLocation>
        <location evidence="1">Cytoplasm</location>
    </subcellularLocation>
</comment>
<comment type="similarity">
    <text evidence="1">Belongs to the FGGY kinase family.</text>
</comment>
<protein>
    <recommendedName>
        <fullName evidence="1">Autoinducer-2 kinase</fullName>
        <shortName evidence="1">AI-2 kinase</shortName>
        <ecNumber evidence="1">2.7.1.189</ecNumber>
    </recommendedName>
</protein>
<accession>B1LFA4</accession>
<reference key="1">
    <citation type="journal article" date="2008" name="J. Bacteriol.">
        <title>Insights into the environmental resistance gene pool from the genome sequence of the multidrug-resistant environmental isolate Escherichia coli SMS-3-5.</title>
        <authorList>
            <person name="Fricke W.F."/>
            <person name="Wright M.S."/>
            <person name="Lindell A.H."/>
            <person name="Harkins D.M."/>
            <person name="Baker-Austin C."/>
            <person name="Ravel J."/>
            <person name="Stepanauskas R."/>
        </authorList>
    </citation>
    <scope>NUCLEOTIDE SEQUENCE [LARGE SCALE GENOMIC DNA]</scope>
    <source>
        <strain>SMS-3-5 / SECEC</strain>
    </source>
</reference>
<feature type="chain" id="PRO_0000351589" description="Autoinducer-2 kinase">
    <location>
        <begin position="1"/>
        <end position="530"/>
    </location>
</feature>
<name>LSRK_ECOSM</name>
<gene>
    <name evidence="1" type="primary">lsrK</name>
    <name type="ordered locus">EcSMS35_1661</name>
</gene>
<dbReference type="EC" id="2.7.1.189" evidence="1"/>
<dbReference type="EMBL" id="CP000970">
    <property type="protein sequence ID" value="ACB19473.1"/>
    <property type="molecule type" value="Genomic_DNA"/>
</dbReference>
<dbReference type="RefSeq" id="WP_000113121.1">
    <property type="nucleotide sequence ID" value="NC_010498.1"/>
</dbReference>
<dbReference type="SMR" id="B1LFA4"/>
<dbReference type="KEGG" id="ecm:EcSMS35_1661"/>
<dbReference type="HOGENOM" id="CLU_009281_3_4_6"/>
<dbReference type="Proteomes" id="UP000007011">
    <property type="component" value="Chromosome"/>
</dbReference>
<dbReference type="GO" id="GO:0005737">
    <property type="term" value="C:cytoplasm"/>
    <property type="evidence" value="ECO:0007669"/>
    <property type="project" value="UniProtKB-SubCell"/>
</dbReference>
<dbReference type="GO" id="GO:0071518">
    <property type="term" value="F:autoinducer-2 kinase activity"/>
    <property type="evidence" value="ECO:0007669"/>
    <property type="project" value="UniProtKB-UniRule"/>
</dbReference>
<dbReference type="GO" id="GO:0005975">
    <property type="term" value="P:carbohydrate metabolic process"/>
    <property type="evidence" value="ECO:0007669"/>
    <property type="project" value="InterPro"/>
</dbReference>
<dbReference type="GO" id="GO:0009372">
    <property type="term" value="P:quorum sensing"/>
    <property type="evidence" value="ECO:0007669"/>
    <property type="project" value="InterPro"/>
</dbReference>
<dbReference type="CDD" id="cd07775">
    <property type="entry name" value="ASKHA_NBD_FGGY_AI-2K"/>
    <property type="match status" value="1"/>
</dbReference>
<dbReference type="FunFam" id="3.30.420.40:FF:000155">
    <property type="entry name" value="Autoinducer-2 kinase"/>
    <property type="match status" value="1"/>
</dbReference>
<dbReference type="Gene3D" id="3.30.420.40">
    <property type="match status" value="2"/>
</dbReference>
<dbReference type="HAMAP" id="MF_02053">
    <property type="entry name" value="LsrK"/>
    <property type="match status" value="1"/>
</dbReference>
<dbReference type="InterPro" id="IPR033676">
    <property type="entry name" value="AI-2_kinase"/>
</dbReference>
<dbReference type="InterPro" id="IPR043129">
    <property type="entry name" value="ATPase_NBD"/>
</dbReference>
<dbReference type="InterPro" id="IPR000577">
    <property type="entry name" value="Carb_kinase_FGGY"/>
</dbReference>
<dbReference type="InterPro" id="IPR018485">
    <property type="entry name" value="FGGY_C"/>
</dbReference>
<dbReference type="InterPro" id="IPR050406">
    <property type="entry name" value="FGGY_Carb_Kinase"/>
</dbReference>
<dbReference type="InterPro" id="IPR018484">
    <property type="entry name" value="FGGY_N"/>
</dbReference>
<dbReference type="NCBIfam" id="NF008187">
    <property type="entry name" value="PRK10939.1"/>
    <property type="match status" value="1"/>
</dbReference>
<dbReference type="PANTHER" id="PTHR43095:SF1">
    <property type="entry name" value="AUTOINDUCER-2 KINASE"/>
    <property type="match status" value="1"/>
</dbReference>
<dbReference type="PANTHER" id="PTHR43095">
    <property type="entry name" value="SUGAR KINASE"/>
    <property type="match status" value="1"/>
</dbReference>
<dbReference type="Pfam" id="PF02782">
    <property type="entry name" value="FGGY_C"/>
    <property type="match status" value="1"/>
</dbReference>
<dbReference type="Pfam" id="PF00370">
    <property type="entry name" value="FGGY_N"/>
    <property type="match status" value="1"/>
</dbReference>
<dbReference type="PIRSF" id="PIRSF000538">
    <property type="entry name" value="GlpK"/>
    <property type="match status" value="1"/>
</dbReference>
<dbReference type="SUPFAM" id="SSF53067">
    <property type="entry name" value="Actin-like ATPase domain"/>
    <property type="match status" value="2"/>
</dbReference>
<evidence type="ECO:0000255" key="1">
    <source>
        <dbReference type="HAMAP-Rule" id="MF_02053"/>
    </source>
</evidence>
<sequence length="530" mass="57583">MARLFTPSESKYYLMALDAGTGSIRAVIFDLEGNQIAVGQAEWRHLAVPDVPGSMEFDLNKNWQLACECMRQALHNAGIAPEYIAAVSACSMREGIVLYNNDGTPIWACANVDARAAREVSELKELHNNTFENKVYRATGQTLALSAIPRLLWLAHHRSDIYRQASTITMISDWLAYMLSGELAVDPSNAGTTGLLDLTTRDWKPALLDMAGLRADILSPVKETGTLLGVVSSHAAELCGLKAGTPVVVGGGDVQLGCLGLGVVRPAQTAVLGGTFWQQVVNLAAPVTDPEMNVRVNPHVIPGMVQAESISFFTGLTMRWFRDAFCAEEKLIAERLGIDTYTLLEEMASRVPPGSWGVMPIFSDRMRFKTWYHAAPSFINLSIDPDKCNKATLFRALEENASIVSACNLQQIADFSNIHPTSLVFAGGGSKGKLWSQILADVSGLPVNIPVVKEATALGCAIAAGVGAGIFSSMAETGERLVRWERTHTPDPEKHELYQDSRDKWQAVYQDQLGLVDHGLTTSLWKAPGL</sequence>
<organism>
    <name type="scientific">Escherichia coli (strain SMS-3-5 / SECEC)</name>
    <dbReference type="NCBI Taxonomy" id="439855"/>
    <lineage>
        <taxon>Bacteria</taxon>
        <taxon>Pseudomonadati</taxon>
        <taxon>Pseudomonadota</taxon>
        <taxon>Gammaproteobacteria</taxon>
        <taxon>Enterobacterales</taxon>
        <taxon>Enterobacteriaceae</taxon>
        <taxon>Escherichia</taxon>
    </lineage>
</organism>